<accession>Q4VXU2</accession>
<accession>A0A6Q8JFT6</accession>
<accession>Q4VY17</accession>
<keyword id="KW-0025">Alternative splicing</keyword>
<keyword id="KW-0963">Cytoplasm</keyword>
<keyword id="KW-0221">Differentiation</keyword>
<keyword id="KW-0225">Disease variant</keyword>
<keyword id="KW-0896">Oogenesis</keyword>
<keyword id="KW-1267">Proteomics identification</keyword>
<keyword id="KW-1185">Reference proteome</keyword>
<keyword id="KW-0677">Repeat</keyword>
<keyword id="KW-0694">RNA-binding</keyword>
<feature type="chain" id="PRO_0000277879" description="Polyadenylate-binding protein 1-like">
    <location>
        <begin position="1"/>
        <end position="619"/>
    </location>
</feature>
<feature type="domain" description="RRM 1" evidence="2">
    <location>
        <begin position="11"/>
        <end position="89"/>
    </location>
</feature>
<feature type="domain" description="RRM 2" evidence="2">
    <location>
        <begin position="99"/>
        <end position="175"/>
    </location>
</feature>
<feature type="domain" description="RRM 3" evidence="2">
    <location>
        <begin position="191"/>
        <end position="268"/>
    </location>
</feature>
<feature type="domain" description="RRM 4" evidence="2">
    <location>
        <begin position="294"/>
        <end position="370"/>
    </location>
</feature>
<feature type="domain" description="PABC" evidence="3">
    <location>
        <begin position="533"/>
        <end position="610"/>
    </location>
</feature>
<feature type="region of interest" description="Disordered" evidence="4">
    <location>
        <begin position="431"/>
        <end position="458"/>
    </location>
</feature>
<feature type="splice variant" id="VSP_057071" description="In isoform 2." evidence="11">
    <original>VMTEGG</original>
    <variation>KRRQRP</variation>
    <location>
        <begin position="325"/>
        <end position="330"/>
    </location>
</feature>
<feature type="splice variant" id="VSP_057072" description="In isoform 2." evidence="11">
    <location>
        <begin position="331"/>
        <end position="619"/>
    </location>
</feature>
<feature type="sequence variant" id="VAR_090408" description="In OZEMA22; likely pathogenic; the orhologous mouse mutation results in female infertility due to early embryonic arrest; results in decreased translation activation; decreased poly(A) binding; no effect on cytoplasmic localization." evidence="6">
    <original>G</original>
    <variation>D</variation>
    <location>
        <position position="97"/>
    </location>
</feature>
<feature type="sequence variant" id="VAR_090409" description="In OZEMA22; pathogenic; the orhologous mouse mutation results in female infertility due to early embryonic arrest; results in decreased translation activation; decreased poly(A) binding; no effect on cytoplasmic localization." evidence="6">
    <original>S</original>
    <variation>F</variation>
    <location>
        <position position="137"/>
    </location>
</feature>
<feature type="sequence variant" id="VAR_090410" description="In OZEMA22; pathogenic." evidence="6">
    <location>
        <begin position="176"/>
        <end position="619"/>
    </location>
</feature>
<feature type="sequence variant" id="VAR_090411" description="In OZEMA22; likely pathogenic; severely decreased expression, if any, in patient cells; loss of PABPC1, CCNB1 and BMP15 mRNAs binding." evidence="7">
    <original>R</original>
    <variation>Q</variation>
    <location>
        <position position="179"/>
    </location>
</feature>
<feature type="sequence variant" id="VAR_054047" description="In dbSNP:rs2075960.">
    <original>S</original>
    <variation>A</variation>
    <location>
        <position position="212"/>
    </location>
</feature>
<feature type="sequence variant" id="VAR_090412" description="In OZEMA22; likely pathogenic; severely decreased expression, if any, in patient cells." evidence="7">
    <original>R</original>
    <variation>W</variation>
    <location>
        <position position="265"/>
    </location>
</feature>
<feature type="sequence variant" id="VAR_090413" description="In OZEMA22; uncertain significance; decreased protein abundance in transfected cells due to increased protein degradation." evidence="8">
    <original>A</original>
    <variation>V</variation>
    <location>
        <position position="346"/>
    </location>
</feature>
<feature type="sequence variant" id="VAR_090414" description="In OZEMA22; uncertain significance; the orhologous mouse mutation results in female infertility due to early embryonic arrest; no effect on translation activation; no effect on poly(A) binding; no effect on cytoplasmic localization." evidence="6">
    <original>R</original>
    <variation>Q</variation>
    <location>
        <position position="374"/>
    </location>
</feature>
<feature type="sequence variant" id="VAR_090415" description="In OZEMA22; pathogenic; loss of protein expression in patient cells." evidence="7">
    <location>
        <begin position="401"/>
        <end position="619"/>
    </location>
</feature>
<feature type="sequence variant" id="VAR_060184" description="In dbSNP:rs6513956.">
    <original>S</original>
    <variation>G</variation>
    <location>
        <position position="497"/>
    </location>
</feature>
<comment type="function">
    <text evidence="1 6 7">Poly(A)-binding protein involved in oocyte maturation and early embryo development (PubMed:37723834, PubMed:37052235). It is required for cytosolic mRNA polyadenylation and translational activation of maternally stored mRNA in oocytes (By similarity).</text>
</comment>
<comment type="subcellular location">
    <subcellularLocation>
        <location evidence="6">Cytoplasm</location>
    </subcellularLocation>
</comment>
<comment type="alternative products">
    <event type="alternative splicing"/>
    <isoform>
        <id>Q4VXU2-1</id>
        <name>1</name>
        <sequence type="displayed"/>
    </isoform>
    <isoform>
        <id>Q4VXU2-2</id>
        <name>2</name>
        <sequence type="described" ref="VSP_057071 VSP_057072"/>
    </isoform>
</comment>
<comment type="tissue specificity">
    <text evidence="5">Expressed in ovary and testis (PubMed:18716053). Also expressed in pancreas, liver and thymus, and at lower levels in other somatic tissues including brain and lung (PubMed:18716053).</text>
</comment>
<comment type="developmental stage">
    <text evidence="5">Expressed at high levels in oocytes at the germinal vesicle (GV) and metaphase II (MII) stages (PubMed:18716053). Expression decreases upon zygotic genome activation (ZGA) and is low in 8-cell and blastocyst stage embryos; the decrease in PABPC1L mRNA levels coincides with an increase in PABPC1 expression.</text>
</comment>
<comment type="disease" evidence="6 7 8">
    <disease id="DI-06997">
        <name>Oocyte/zygote/embryo maturation arrest 22</name>
        <acronym>OZEMA22</acronym>
        <description>An autosomal recessive, female infertility disorder characterized by oocyte maturation arrest, primarily at the germinal vesicle or metaphase I stages. In some cases, oocyte reaching the metaphase II stage can be fertilized, but embryo development is arrested before the 4-cell stage.</description>
        <dbReference type="MIM" id="621093"/>
    </disease>
    <text>The disease is caused by variants affecting the gene represented in this entry.</text>
</comment>
<comment type="similarity">
    <text evidence="12">Belongs to the polyadenylate-binding protein type-1 family.</text>
</comment>
<reference key="1">
    <citation type="submission" date="2007-10" db="EMBL/GenBank/DDBJ databases">
        <authorList>
            <person name="Sakugawa N."/>
        </authorList>
    </citation>
    <scope>NUCLEOTIDE SEQUENCE [MRNA] (ISOFORM 2)</scope>
</reference>
<reference key="2">
    <citation type="journal article" date="2001" name="Nature">
        <title>The DNA sequence and comparative analysis of human chromosome 20.</title>
        <authorList>
            <person name="Deloukas P."/>
            <person name="Matthews L.H."/>
            <person name="Ashurst J.L."/>
            <person name="Burton J."/>
            <person name="Gilbert J.G.R."/>
            <person name="Jones M."/>
            <person name="Stavrides G."/>
            <person name="Almeida J.P."/>
            <person name="Babbage A.K."/>
            <person name="Bagguley C.L."/>
            <person name="Bailey J."/>
            <person name="Barlow K.F."/>
            <person name="Bates K.N."/>
            <person name="Beard L.M."/>
            <person name="Beare D.M."/>
            <person name="Beasley O.P."/>
            <person name="Bird C.P."/>
            <person name="Blakey S.E."/>
            <person name="Bridgeman A.M."/>
            <person name="Brown A.J."/>
            <person name="Buck D."/>
            <person name="Burrill W.D."/>
            <person name="Butler A.P."/>
            <person name="Carder C."/>
            <person name="Carter N.P."/>
            <person name="Chapman J.C."/>
            <person name="Clamp M."/>
            <person name="Clark G."/>
            <person name="Clark L.N."/>
            <person name="Clark S.Y."/>
            <person name="Clee C.M."/>
            <person name="Clegg S."/>
            <person name="Cobley V.E."/>
            <person name="Collier R.E."/>
            <person name="Connor R.E."/>
            <person name="Corby N.R."/>
            <person name="Coulson A."/>
            <person name="Coville G.J."/>
            <person name="Deadman R."/>
            <person name="Dhami P.D."/>
            <person name="Dunn M."/>
            <person name="Ellington A.G."/>
            <person name="Frankland J.A."/>
            <person name="Fraser A."/>
            <person name="French L."/>
            <person name="Garner P."/>
            <person name="Grafham D.V."/>
            <person name="Griffiths C."/>
            <person name="Griffiths M.N.D."/>
            <person name="Gwilliam R."/>
            <person name="Hall R.E."/>
            <person name="Hammond S."/>
            <person name="Harley J.L."/>
            <person name="Heath P.D."/>
            <person name="Ho S."/>
            <person name="Holden J.L."/>
            <person name="Howden P.J."/>
            <person name="Huckle E."/>
            <person name="Hunt A.R."/>
            <person name="Hunt S.E."/>
            <person name="Jekosch K."/>
            <person name="Johnson C.M."/>
            <person name="Johnson D."/>
            <person name="Kay M.P."/>
            <person name="Kimberley A.M."/>
            <person name="King A."/>
            <person name="Knights A."/>
            <person name="Laird G.K."/>
            <person name="Lawlor S."/>
            <person name="Lehvaeslaiho M.H."/>
            <person name="Leversha M.A."/>
            <person name="Lloyd C."/>
            <person name="Lloyd D.M."/>
            <person name="Lovell J.D."/>
            <person name="Marsh V.L."/>
            <person name="Martin S.L."/>
            <person name="McConnachie L.J."/>
            <person name="McLay K."/>
            <person name="McMurray A.A."/>
            <person name="Milne S.A."/>
            <person name="Mistry D."/>
            <person name="Moore M.J.F."/>
            <person name="Mullikin J.C."/>
            <person name="Nickerson T."/>
            <person name="Oliver K."/>
            <person name="Parker A."/>
            <person name="Patel R."/>
            <person name="Pearce T.A.V."/>
            <person name="Peck A.I."/>
            <person name="Phillimore B.J.C.T."/>
            <person name="Prathalingam S.R."/>
            <person name="Plumb R.W."/>
            <person name="Ramsay H."/>
            <person name="Rice C.M."/>
            <person name="Ross M.T."/>
            <person name="Scott C.E."/>
            <person name="Sehra H.K."/>
            <person name="Shownkeen R."/>
            <person name="Sims S."/>
            <person name="Skuce C.D."/>
            <person name="Smith M.L."/>
            <person name="Soderlund C."/>
            <person name="Steward C.A."/>
            <person name="Sulston J.E."/>
            <person name="Swann R.M."/>
            <person name="Sycamore N."/>
            <person name="Taylor R."/>
            <person name="Tee L."/>
            <person name="Thomas D.W."/>
            <person name="Thorpe A."/>
            <person name="Tracey A."/>
            <person name="Tromans A.C."/>
            <person name="Vaudin M."/>
            <person name="Wall M."/>
            <person name="Wallis J.M."/>
            <person name="Whitehead S.L."/>
            <person name="Whittaker P."/>
            <person name="Willey D.L."/>
            <person name="Williams L."/>
            <person name="Williams S.A."/>
            <person name="Wilming L."/>
            <person name="Wray P.W."/>
            <person name="Hubbard T."/>
            <person name="Durbin R.M."/>
            <person name="Bentley D.R."/>
            <person name="Beck S."/>
            <person name="Rogers J."/>
        </authorList>
    </citation>
    <scope>NUCLEOTIDE SEQUENCE [LARGE SCALE GENOMIC DNA]</scope>
</reference>
<reference key="3">
    <citation type="journal article" date="2008" name="Mol. Hum. Reprod.">
        <title>Identification and characterization of human embryonic poly(A) binding protein (EPAB).</title>
        <authorList>
            <person name="Guzeloglu-Kayisli O."/>
            <person name="Pauli S."/>
            <person name="Demir H."/>
            <person name="Lalioti M.D."/>
            <person name="Sakkas D."/>
            <person name="Seli E."/>
        </authorList>
    </citation>
    <scope>ALTERNATIVE SPLICING</scope>
    <scope>TISSUE SPECIFICITY</scope>
    <scope>DEVELOPMENTAL STAGE</scope>
</reference>
<reference key="4">
    <citation type="journal article" date="2023" name="Clin. Genet.">
        <title>Identification of nonfunctional PABPC1L causing oocyte maturation abnormalities and early embryonic arrest in female primary infertility.</title>
        <authorList>
            <person name="Wang X."/>
            <person name="Zhou R."/>
            <person name="Lu X."/>
            <person name="Dai S."/>
            <person name="Liu M."/>
            <person name="Jiang C."/>
            <person name="Yang Y."/>
            <person name="Shen Y."/>
            <person name="Wang Y."/>
            <person name="Liu H."/>
        </authorList>
    </citation>
    <scope>FUNCTION</scope>
    <scope>VARIANTS OZEMA22 GLN-179; TRP-265 AND 401-GLN--HIS-614 DEL</scope>
    <scope>CHARACTERIZATION OF VARIANTS OZEMA22 GLN-179; TRP-265 AND 401-GLN--HIS-614 DEL</scope>
    <scope>INVOLVEMENT IN OZEMA22</scope>
</reference>
<reference key="5">
    <citation type="journal article" date="2023" name="EMBO Mol. Med.">
        <title>Bi-allelic pathogenic variants in PABPC1L cause oocyte maturation arrest and female infertility.</title>
        <authorList>
            <person name="Wang W."/>
            <person name="Guo J."/>
            <person name="Shi J."/>
            <person name="Li Q."/>
            <person name="Chen B."/>
            <person name="Pan Z."/>
            <person name="Qu R."/>
            <person name="Fu J."/>
            <person name="Shi R."/>
            <person name="Xue X."/>
            <person name="Mu J."/>
            <person name="Zhang Z."/>
            <person name="Wu T."/>
            <person name="Wang W."/>
            <person name="Zhao L."/>
            <person name="Li Q."/>
            <person name="He L."/>
            <person name="Sun X."/>
            <person name="Sang Q."/>
            <person name="Lin G."/>
            <person name="Wang L."/>
        </authorList>
    </citation>
    <scope>FUNCTION</scope>
    <scope>VARIANTS OZEMA22 ASP-97; PHE-137; 176-ARG--HIS-614 DEL AND GLN-374</scope>
    <scope>CHARACTERIZATION OF VARIANTS OZEMA22 ASP-97; PHE-137 AND GLN-374</scope>
    <scope>INVOLVEMENT IN OZEMA22</scope>
    <scope>SUBCELLULAR LOCATION</scope>
</reference>
<reference key="6">
    <citation type="journal article" date="2024" name="J. Assist. Reprod. Genet.">
        <title>Pathogenic missense variation in PABPC1L/EPAB causes female infertility due to oocyte maturation arrest at the germinal vesicle stage.</title>
        <authorList>
            <person name="Okutman O."/>
            <person name="Guerbuez A.S."/>
            <person name="Bueyuek U."/>
            <person name="Real E."/>
            <person name="Leconte R."/>
            <person name="Chennen K."/>
            <person name="Mayer C."/>
            <person name="Muller J."/>
            <person name="Le May N."/>
            <person name="Viville S."/>
        </authorList>
    </citation>
    <scope>VARIANT OZEMA22 VAL-346</scope>
    <scope>CHARACTERIZATION OF VARIANT OZEMA22 VAL-346</scope>
</reference>
<gene>
    <name evidence="13" type="primary">PABPC1L</name>
    <name evidence="13" type="synonym">C20orf119</name>
    <name evidence="9 10 13" type="synonym">EPAB</name>
</gene>
<proteinExistence type="evidence at protein level"/>
<sequence>MNASGSGYPLASLYVGDLHPDVTEAMLYEKFSPAGPILSIRVCRDVATRRSLGYAYINFQQPADAERALDTMNFEMLKGQPIRIMWSQRDPGLRKSGVGNIFIKNLEDSIDNKALYDTFSTFGNILSCKVACDEHGSRGFGFVHFETHEAAQQAINTMNGMLLNDRKVFVGHFKSRREREAELGARALEFTNIYVKNLPVDVDEQGLQDLFSQFGKMLSVKVMRDNSGHSRCFGFVNFEKHEEAQKAVVHMNGKEVSGRLLYAGRAQKRVERQNELKRRFEQMKQDRLRRYQGVNLYVKNLDDSIDDDKLRKEFSPYGVITSAKVMTEGGHSKGFGFVCFSSPEEATKAVTEMNGRIVGTKPLYVALAQRKEERKAILTNQYMQRLSTMRTLSNPLLGSFQQPSSYFLPAMPQPPAQAAYYGCGPVTPTQPAPRWTSQPPRPSSAYPPGASMVRPPVVPRRPPAHISSVRQASTQVPRTVPHTQRVANIGTQTTGPSGVGCCTPGRPLLPCKCSSAAHSTYRVQEPAVHIPGQEPLTASMLAAAPLHEQKQMIGERLYPLIHDVHTQLAGKITGMLLEIDNSELLLMLESPESLHAKIDEAVAVLQAHQAMEQPKAYMH</sequence>
<protein>
    <recommendedName>
        <fullName evidence="12">Polyadenylate-binding protein 1-like</fullName>
    </recommendedName>
    <alternativeName>
        <fullName evidence="9 10">Embryonic poly(A)-binding protein</fullName>
    </alternativeName>
    <alternativeName>
        <fullName evidence="10 13">Poly(A) binding protein cytoplasmic 1 like</fullName>
    </alternativeName>
</protein>
<name>PAP1L_HUMAN</name>
<evidence type="ECO:0000250" key="1">
    <source>
        <dbReference type="UniProtKB" id="A2A5N3"/>
    </source>
</evidence>
<evidence type="ECO:0000255" key="2">
    <source>
        <dbReference type="PROSITE-ProRule" id="PRU00176"/>
    </source>
</evidence>
<evidence type="ECO:0000255" key="3">
    <source>
        <dbReference type="PROSITE-ProRule" id="PRU00641"/>
    </source>
</evidence>
<evidence type="ECO:0000256" key="4">
    <source>
        <dbReference type="SAM" id="MobiDB-lite"/>
    </source>
</evidence>
<evidence type="ECO:0000269" key="5">
    <source>
    </source>
</evidence>
<evidence type="ECO:0000269" key="6">
    <source>
    </source>
</evidence>
<evidence type="ECO:0000269" key="7">
    <source>
    </source>
</evidence>
<evidence type="ECO:0000269" key="8">
    <source>
    </source>
</evidence>
<evidence type="ECO:0000303" key="9">
    <source>
    </source>
</evidence>
<evidence type="ECO:0000303" key="10">
    <source>
    </source>
</evidence>
<evidence type="ECO:0000303" key="11">
    <source ref="1"/>
</evidence>
<evidence type="ECO:0000305" key="12"/>
<evidence type="ECO:0000312" key="13">
    <source>
        <dbReference type="HGNC" id="HGNC:15797"/>
    </source>
</evidence>
<dbReference type="EMBL" id="EU190483">
    <property type="protein sequence ID" value="ABY64766.1"/>
    <property type="molecule type" value="mRNA"/>
</dbReference>
<dbReference type="EMBL" id="AL109839">
    <property type="status" value="NOT_ANNOTATED_CDS"/>
    <property type="molecule type" value="Genomic_DNA"/>
</dbReference>
<dbReference type="EMBL" id="AL008725">
    <property type="status" value="NOT_ANNOTATED_CDS"/>
    <property type="molecule type" value="Genomic_DNA"/>
</dbReference>
<dbReference type="RefSeq" id="NP_001118228.1">
    <property type="nucleotide sequence ID" value="NM_001124756.2"/>
</dbReference>
<dbReference type="SMR" id="Q4VXU2"/>
<dbReference type="BioGRID" id="123246">
    <property type="interactions" value="28"/>
</dbReference>
<dbReference type="FunCoup" id="Q4VXU2">
    <property type="interactions" value="1135"/>
</dbReference>
<dbReference type="IntAct" id="Q4VXU2">
    <property type="interactions" value="11"/>
</dbReference>
<dbReference type="STRING" id="9606.ENSP00000255136"/>
<dbReference type="GlyGen" id="Q4VXU2">
    <property type="glycosylation" value="2 sites, 1 O-linked glycan (1 site)"/>
</dbReference>
<dbReference type="iPTMnet" id="Q4VXU2"/>
<dbReference type="PhosphoSitePlus" id="Q4VXU2"/>
<dbReference type="SwissPalm" id="Q4VXU2"/>
<dbReference type="BioMuta" id="PABPC1L"/>
<dbReference type="DMDM" id="74754038"/>
<dbReference type="jPOST" id="Q4VXU2"/>
<dbReference type="MassIVE" id="Q4VXU2"/>
<dbReference type="PaxDb" id="9606-ENSP00000255136"/>
<dbReference type="PeptideAtlas" id="Q4VXU2"/>
<dbReference type="ProteomicsDB" id="62357">
    <molecule id="Q4VXU2-1"/>
</dbReference>
<dbReference type="ProteomicsDB" id="62366"/>
<dbReference type="Pumba" id="Q4VXU2"/>
<dbReference type="Antibodypedia" id="72120">
    <property type="antibodies" value="62 antibodies from 8 providers"/>
</dbReference>
<dbReference type="Ensembl" id="ENST00000255136.8">
    <molecule id="Q4VXU2-1"/>
    <property type="protein sequence ID" value="ENSP00000255136.3"/>
    <property type="gene ID" value="ENSG00000101104.13"/>
</dbReference>
<dbReference type="Ensembl" id="ENST00000537323.5">
    <molecule id="Q4VXU2-2"/>
    <property type="protein sequence ID" value="ENSP00000445661.1"/>
    <property type="gene ID" value="ENSG00000101104.13"/>
</dbReference>
<dbReference type="GeneID" id="80336"/>
<dbReference type="MANE-Select" id="ENST00000217073.7">
    <property type="protein sequence ID" value="ENSP00000217073.3"/>
    <property type="RefSeq nucleotide sequence ID" value="NM_001372179.1"/>
    <property type="RefSeq protein sequence ID" value="NP_001359108.1"/>
</dbReference>
<dbReference type="UCSC" id="uc010ggv.1">
    <molecule id="Q4VXU2-1"/>
    <property type="organism name" value="human"/>
</dbReference>
<dbReference type="AGR" id="HGNC:15797"/>
<dbReference type="GeneCards" id="PABPC1L"/>
<dbReference type="HGNC" id="HGNC:15797">
    <property type="gene designation" value="PABPC1L"/>
</dbReference>
<dbReference type="HPA" id="ENSG00000101104">
    <property type="expression patterns" value="Low tissue specificity"/>
</dbReference>
<dbReference type="MalaCards" id="PABPC1L"/>
<dbReference type="MIM" id="621055">
    <property type="type" value="gene"/>
</dbReference>
<dbReference type="MIM" id="621093">
    <property type="type" value="phenotype"/>
</dbReference>
<dbReference type="neXtProt" id="NX_Q4VXU2"/>
<dbReference type="OpenTargets" id="ENSG00000101104"/>
<dbReference type="PharmGKB" id="PA162398552"/>
<dbReference type="VEuPathDB" id="HostDB:ENSG00000101104"/>
<dbReference type="eggNOG" id="KOG0123">
    <property type="taxonomic scope" value="Eukaryota"/>
</dbReference>
<dbReference type="GeneTree" id="ENSGT00940000157106"/>
<dbReference type="HOGENOM" id="CLU_012062_22_6_1"/>
<dbReference type="InParanoid" id="Q4VXU2"/>
<dbReference type="OMA" id="DHMNGKE"/>
<dbReference type="OrthoDB" id="19742at2759"/>
<dbReference type="PAN-GO" id="Q4VXU2">
    <property type="GO annotations" value="7 GO annotations based on evolutionary models"/>
</dbReference>
<dbReference type="PhylomeDB" id="Q4VXU2"/>
<dbReference type="TreeFam" id="TF300458"/>
<dbReference type="PathwayCommons" id="Q4VXU2"/>
<dbReference type="SignaLink" id="Q4VXU2"/>
<dbReference type="BioGRID-ORCS" id="80336">
    <property type="hits" value="13 hits in 1155 CRISPR screens"/>
</dbReference>
<dbReference type="CD-CODE" id="91857CE7">
    <property type="entry name" value="Nucleolus"/>
</dbReference>
<dbReference type="ChiTaRS" id="PABPC1L">
    <property type="organism name" value="human"/>
</dbReference>
<dbReference type="GenomeRNAi" id="80336"/>
<dbReference type="Pharos" id="Q4VXU2">
    <property type="development level" value="Tbio"/>
</dbReference>
<dbReference type="PRO" id="PR:Q4VXU2"/>
<dbReference type="Proteomes" id="UP000005640">
    <property type="component" value="Chromosome 20"/>
</dbReference>
<dbReference type="RNAct" id="Q4VXU2">
    <property type="molecule type" value="protein"/>
</dbReference>
<dbReference type="Bgee" id="ENSG00000101104">
    <property type="expression patterns" value="Expressed in body of pancreas and 146 other cell types or tissues"/>
</dbReference>
<dbReference type="ExpressionAtlas" id="Q4VXU2">
    <property type="expression patterns" value="baseline and differential"/>
</dbReference>
<dbReference type="GO" id="GO:0010494">
    <property type="term" value="C:cytoplasmic stress granule"/>
    <property type="evidence" value="ECO:0000318"/>
    <property type="project" value="GO_Central"/>
</dbReference>
<dbReference type="GO" id="GO:0005829">
    <property type="term" value="C:cytosol"/>
    <property type="evidence" value="ECO:0000318"/>
    <property type="project" value="GO_Central"/>
</dbReference>
<dbReference type="GO" id="GO:0070062">
    <property type="term" value="C:extracellular exosome"/>
    <property type="evidence" value="ECO:0007005"/>
    <property type="project" value="UniProtKB"/>
</dbReference>
<dbReference type="GO" id="GO:0005634">
    <property type="term" value="C:nucleus"/>
    <property type="evidence" value="ECO:0000318"/>
    <property type="project" value="GO_Central"/>
</dbReference>
<dbReference type="GO" id="GO:1990904">
    <property type="term" value="C:ribonucleoprotein complex"/>
    <property type="evidence" value="ECO:0000318"/>
    <property type="project" value="GO_Central"/>
</dbReference>
<dbReference type="GO" id="GO:0003730">
    <property type="term" value="F:mRNA 3'-UTR binding"/>
    <property type="evidence" value="ECO:0000318"/>
    <property type="project" value="GO_Central"/>
</dbReference>
<dbReference type="GO" id="GO:0008143">
    <property type="term" value="F:poly(A) binding"/>
    <property type="evidence" value="ECO:0000318"/>
    <property type="project" value="GO_Central"/>
</dbReference>
<dbReference type="GO" id="GO:0008266">
    <property type="term" value="F:poly(U) RNA binding"/>
    <property type="evidence" value="ECO:0000318"/>
    <property type="project" value="GO_Central"/>
</dbReference>
<dbReference type="CDD" id="cd12378">
    <property type="entry name" value="RRM1_I_PABPs"/>
    <property type="match status" value="1"/>
</dbReference>
<dbReference type="CDD" id="cd12379">
    <property type="entry name" value="RRM2_I_PABPs"/>
    <property type="match status" value="1"/>
</dbReference>
<dbReference type="CDD" id="cd12380">
    <property type="entry name" value="RRM3_I_PABPs"/>
    <property type="match status" value="1"/>
</dbReference>
<dbReference type="CDD" id="cd12381">
    <property type="entry name" value="RRM4_I_PABPs"/>
    <property type="match status" value="1"/>
</dbReference>
<dbReference type="FunFam" id="3.30.70.330:FF:002130">
    <property type="match status" value="1"/>
</dbReference>
<dbReference type="FunFam" id="1.10.1900.10:FF:000007">
    <property type="entry name" value="Polyadenylate-binding protein"/>
    <property type="match status" value="1"/>
</dbReference>
<dbReference type="FunFam" id="3.30.70.330:FF:000003">
    <property type="entry name" value="Polyadenylate-binding protein"/>
    <property type="match status" value="1"/>
</dbReference>
<dbReference type="FunFam" id="3.30.70.330:FF:000021">
    <property type="entry name" value="Polyadenylate-binding protein"/>
    <property type="match status" value="1"/>
</dbReference>
<dbReference type="FunFam" id="3.30.70.330:FF:000049">
    <property type="entry name" value="Polyadenylate-binding protein"/>
    <property type="match status" value="1"/>
</dbReference>
<dbReference type="Gene3D" id="3.30.70.330">
    <property type="match status" value="4"/>
</dbReference>
<dbReference type="Gene3D" id="1.10.1900.10">
    <property type="entry name" value="c-terminal domain of poly(a) binding protein"/>
    <property type="match status" value="1"/>
</dbReference>
<dbReference type="InterPro" id="IPR012677">
    <property type="entry name" value="Nucleotide-bd_a/b_plait_sf"/>
</dbReference>
<dbReference type="InterPro" id="IPR036053">
    <property type="entry name" value="PABP-dom"/>
</dbReference>
<dbReference type="InterPro" id="IPR006515">
    <property type="entry name" value="PABP_1234"/>
</dbReference>
<dbReference type="InterPro" id="IPR002004">
    <property type="entry name" value="PABP_HYD_C"/>
</dbReference>
<dbReference type="InterPro" id="IPR034364">
    <property type="entry name" value="PABP_RRM1"/>
</dbReference>
<dbReference type="InterPro" id="IPR035979">
    <property type="entry name" value="RBD_domain_sf"/>
</dbReference>
<dbReference type="InterPro" id="IPR045305">
    <property type="entry name" value="RRM2_I_PABPs"/>
</dbReference>
<dbReference type="InterPro" id="IPR000504">
    <property type="entry name" value="RRM_dom"/>
</dbReference>
<dbReference type="InterPro" id="IPR003954">
    <property type="entry name" value="RRM_dom_euk"/>
</dbReference>
<dbReference type="NCBIfam" id="TIGR01628">
    <property type="entry name" value="PABP-1234"/>
    <property type="match status" value="1"/>
</dbReference>
<dbReference type="PANTHER" id="PTHR24012">
    <property type="entry name" value="RNA BINDING PROTEIN"/>
    <property type="match status" value="1"/>
</dbReference>
<dbReference type="Pfam" id="PF00658">
    <property type="entry name" value="MLLE"/>
    <property type="match status" value="1"/>
</dbReference>
<dbReference type="Pfam" id="PF00076">
    <property type="entry name" value="RRM_1"/>
    <property type="match status" value="4"/>
</dbReference>
<dbReference type="SMART" id="SM00517">
    <property type="entry name" value="PolyA"/>
    <property type="match status" value="1"/>
</dbReference>
<dbReference type="SMART" id="SM00360">
    <property type="entry name" value="RRM"/>
    <property type="match status" value="4"/>
</dbReference>
<dbReference type="SMART" id="SM00361">
    <property type="entry name" value="RRM_1"/>
    <property type="match status" value="3"/>
</dbReference>
<dbReference type="SUPFAM" id="SSF63570">
    <property type="entry name" value="PABC (PABP) domain"/>
    <property type="match status" value="1"/>
</dbReference>
<dbReference type="SUPFAM" id="SSF54928">
    <property type="entry name" value="RNA-binding domain, RBD"/>
    <property type="match status" value="2"/>
</dbReference>
<dbReference type="PROSITE" id="PS51309">
    <property type="entry name" value="PABC"/>
    <property type="match status" value="1"/>
</dbReference>
<dbReference type="PROSITE" id="PS50102">
    <property type="entry name" value="RRM"/>
    <property type="match status" value="4"/>
</dbReference>
<organism>
    <name type="scientific">Homo sapiens</name>
    <name type="common">Human</name>
    <dbReference type="NCBI Taxonomy" id="9606"/>
    <lineage>
        <taxon>Eukaryota</taxon>
        <taxon>Metazoa</taxon>
        <taxon>Chordata</taxon>
        <taxon>Craniata</taxon>
        <taxon>Vertebrata</taxon>
        <taxon>Euteleostomi</taxon>
        <taxon>Mammalia</taxon>
        <taxon>Eutheria</taxon>
        <taxon>Euarchontoglires</taxon>
        <taxon>Primates</taxon>
        <taxon>Haplorrhini</taxon>
        <taxon>Catarrhini</taxon>
        <taxon>Hominidae</taxon>
        <taxon>Homo</taxon>
    </lineage>
</organism>